<name>RL36_CERSK</name>
<organism>
    <name type="scientific">Cereibacter sphaeroides (strain KD131 / KCTC 12085)</name>
    <name type="common">Rhodobacter sphaeroides</name>
    <dbReference type="NCBI Taxonomy" id="557760"/>
    <lineage>
        <taxon>Bacteria</taxon>
        <taxon>Pseudomonadati</taxon>
        <taxon>Pseudomonadota</taxon>
        <taxon>Alphaproteobacteria</taxon>
        <taxon>Rhodobacterales</taxon>
        <taxon>Paracoccaceae</taxon>
        <taxon>Cereibacter</taxon>
    </lineage>
</organism>
<feature type="chain" id="PRO_1000196205" description="Large ribosomal subunit protein bL36">
    <location>
        <begin position="1"/>
        <end position="41"/>
    </location>
</feature>
<dbReference type="EMBL" id="CP001150">
    <property type="protein sequence ID" value="ACM02657.1"/>
    <property type="molecule type" value="Genomic_DNA"/>
</dbReference>
<dbReference type="SMR" id="B9KQQ7"/>
<dbReference type="GeneID" id="67448168"/>
<dbReference type="KEGG" id="rsk:RSKD131_2797"/>
<dbReference type="HOGENOM" id="CLU_135723_3_2_5"/>
<dbReference type="GO" id="GO:1990904">
    <property type="term" value="C:ribonucleoprotein complex"/>
    <property type="evidence" value="ECO:0007669"/>
    <property type="project" value="UniProtKB-KW"/>
</dbReference>
<dbReference type="GO" id="GO:0005840">
    <property type="term" value="C:ribosome"/>
    <property type="evidence" value="ECO:0007669"/>
    <property type="project" value="UniProtKB-KW"/>
</dbReference>
<dbReference type="GO" id="GO:0003735">
    <property type="term" value="F:structural constituent of ribosome"/>
    <property type="evidence" value="ECO:0007669"/>
    <property type="project" value="InterPro"/>
</dbReference>
<dbReference type="GO" id="GO:0006412">
    <property type="term" value="P:translation"/>
    <property type="evidence" value="ECO:0007669"/>
    <property type="project" value="UniProtKB-UniRule"/>
</dbReference>
<dbReference type="HAMAP" id="MF_00251">
    <property type="entry name" value="Ribosomal_bL36"/>
    <property type="match status" value="1"/>
</dbReference>
<dbReference type="InterPro" id="IPR000473">
    <property type="entry name" value="Ribosomal_bL36"/>
</dbReference>
<dbReference type="InterPro" id="IPR035977">
    <property type="entry name" value="Ribosomal_bL36_sp"/>
</dbReference>
<dbReference type="InterPro" id="IPR047621">
    <property type="entry name" value="Ribosomal_L36_bact"/>
</dbReference>
<dbReference type="NCBIfam" id="NF002021">
    <property type="entry name" value="PRK00831.1"/>
    <property type="match status" value="1"/>
</dbReference>
<dbReference type="NCBIfam" id="TIGR01022">
    <property type="entry name" value="rpmJ_bact"/>
    <property type="match status" value="1"/>
</dbReference>
<dbReference type="PANTHER" id="PTHR47781">
    <property type="entry name" value="50S RIBOSOMAL PROTEIN L36 2"/>
    <property type="match status" value="1"/>
</dbReference>
<dbReference type="PANTHER" id="PTHR47781:SF1">
    <property type="entry name" value="LARGE RIBOSOMAL SUBUNIT PROTEIN BL36B"/>
    <property type="match status" value="1"/>
</dbReference>
<dbReference type="Pfam" id="PF00444">
    <property type="entry name" value="Ribosomal_L36"/>
    <property type="match status" value="1"/>
</dbReference>
<dbReference type="SUPFAM" id="SSF57840">
    <property type="entry name" value="Ribosomal protein L36"/>
    <property type="match status" value="1"/>
</dbReference>
<proteinExistence type="inferred from homology"/>
<accession>B9KQQ7</accession>
<protein>
    <recommendedName>
        <fullName evidence="1">Large ribosomal subunit protein bL36</fullName>
    </recommendedName>
    <alternativeName>
        <fullName evidence="2">50S ribosomal protein L36</fullName>
    </alternativeName>
</protein>
<evidence type="ECO:0000255" key="1">
    <source>
        <dbReference type="HAMAP-Rule" id="MF_00251"/>
    </source>
</evidence>
<evidence type="ECO:0000305" key="2"/>
<sequence length="41" mass="4942">MKVANSLRSLKLRHRDCQVVRRKGRVYVINKTQKRYKARQG</sequence>
<comment type="similarity">
    <text evidence="1">Belongs to the bacterial ribosomal protein bL36 family.</text>
</comment>
<gene>
    <name evidence="1" type="primary">rpmJ</name>
    <name type="ordered locus">RSKD131_2797</name>
</gene>
<reference key="1">
    <citation type="journal article" date="2009" name="J. Bacteriol.">
        <title>Complete genome sequence of Rhodobacter sphaeroides KD131.</title>
        <authorList>
            <person name="Lim S.-K."/>
            <person name="Kim S.J."/>
            <person name="Cha S.H."/>
            <person name="Oh Y.-K."/>
            <person name="Rhee H.-J."/>
            <person name="Kim M.-S."/>
            <person name="Lee J.K."/>
        </authorList>
    </citation>
    <scope>NUCLEOTIDE SEQUENCE [LARGE SCALE GENOMIC DNA]</scope>
    <source>
        <strain>KD131 / KCTC 12085</strain>
    </source>
</reference>
<keyword id="KW-0687">Ribonucleoprotein</keyword>
<keyword id="KW-0689">Ribosomal protein</keyword>